<sequence>MFEKIPNQNSHSMGDNNTGYYNNNNNNNNNNNNNNNNSNNNNNNSNNNNNNNINNNNNNNNNNNNNNNNNNNNNNNTSQQLPSPQLSQPNSMNTTPNQTSPNLRSSPNRVANNMTQINILTPHLLPGSPSASPIPISSIPTASVYRQPFSSSSSSNHDQGSYPIINTKSIIPSASQLQSQNLNIINSINNNFSKDSPNSQNNTSFNEDTIFIASTTYGSSNTPNNNNNNINNNNSNNNNNSNNSNNNNNSTNNNNNSSNINSPNDFNNNHNNNNNNNNNNNNNNNNNNSSNSNINNNNNNSNNSNNNIDNSNNNNNNNNVRSGNSNVNANGHNRLKRKSKENIYNNNNQNNNNQNNNQNNNHNNNHNNNHNNNQNNNQNNIQNTNQNNIQNNHNQQNNNNHQNNNNQNNNYQNNNNQNSGNNNNQNHHNNKFNQNNNHNQNNHSNNQNKNNHNNNHNNNNHNNNNHNNNNNNHNNNNNNHNNNNNHNNQNNHNNQNNNHNNNQNNNYNNNQNNNYNPNNYGNNYNPNNNYNNSNNPNNMNNNYNHNQNNNNNNNNNNQNYNNNHNNQFNNQNNQIHNQSNNQNNYNQNNNHNNNNQNNNNNNQNNNNNNNQNNNNNNNNINNNNNNNNNNNNGNTGLSSSTNNSKHSSPRSSPNNSPLNYNTNEEYYNSGSSSPSSPGSPNSSILQITDGNNGFNNQNNLNNGNNGNQNYNNNNGQFNNNFDNNGQNNNNNNNNNNNNNNNNNENNRNSPTTTQPQIQTTQPLINGANSAFVFPSTPKTNSSTTLFGVMPNEQETWIEIRDLSCSISKMAKSSLTNGITEEMLNEIKEKGTDLINMIENVTQKEKLERKYNDDDRNRIFPPLTRPRRFRKKKKPNVTEPPVEKVKKKADTLFCTSCGTTQTPEWRKGPAGGKSLCNACGLHYAKLMKKEIQLSKVETTSSPPSTSMNVVNLLN</sequence>
<organism>
    <name type="scientific">Dictyostelium discoideum</name>
    <name type="common">Social amoeba</name>
    <dbReference type="NCBI Taxonomy" id="44689"/>
    <lineage>
        <taxon>Eukaryota</taxon>
        <taxon>Amoebozoa</taxon>
        <taxon>Evosea</taxon>
        <taxon>Eumycetozoa</taxon>
        <taxon>Dictyostelia</taxon>
        <taxon>Dictyosteliales</taxon>
        <taxon>Dictyosteliaceae</taxon>
        <taxon>Dictyostelium</taxon>
    </lineage>
</organism>
<reference key="1">
    <citation type="journal article" date="2005" name="Nature">
        <title>The genome of the social amoeba Dictyostelium discoideum.</title>
        <authorList>
            <person name="Eichinger L."/>
            <person name="Pachebat J.A."/>
            <person name="Gloeckner G."/>
            <person name="Rajandream M.A."/>
            <person name="Sucgang R."/>
            <person name="Berriman M."/>
            <person name="Song J."/>
            <person name="Olsen R."/>
            <person name="Szafranski K."/>
            <person name="Xu Q."/>
            <person name="Tunggal B."/>
            <person name="Kummerfeld S."/>
            <person name="Madera M."/>
            <person name="Konfortov B.A."/>
            <person name="Rivero F."/>
            <person name="Bankier A.T."/>
            <person name="Lehmann R."/>
            <person name="Hamlin N."/>
            <person name="Davies R."/>
            <person name="Gaudet P."/>
            <person name="Fey P."/>
            <person name="Pilcher K."/>
            <person name="Chen G."/>
            <person name="Saunders D."/>
            <person name="Sodergren E.J."/>
            <person name="Davis P."/>
            <person name="Kerhornou A."/>
            <person name="Nie X."/>
            <person name="Hall N."/>
            <person name="Anjard C."/>
            <person name="Hemphill L."/>
            <person name="Bason N."/>
            <person name="Farbrother P."/>
            <person name="Desany B."/>
            <person name="Just E."/>
            <person name="Morio T."/>
            <person name="Rost R."/>
            <person name="Churcher C.M."/>
            <person name="Cooper J."/>
            <person name="Haydock S."/>
            <person name="van Driessche N."/>
            <person name="Cronin A."/>
            <person name="Goodhead I."/>
            <person name="Muzny D.M."/>
            <person name="Mourier T."/>
            <person name="Pain A."/>
            <person name="Lu M."/>
            <person name="Harper D."/>
            <person name="Lindsay R."/>
            <person name="Hauser H."/>
            <person name="James K.D."/>
            <person name="Quiles M."/>
            <person name="Madan Babu M."/>
            <person name="Saito T."/>
            <person name="Buchrieser C."/>
            <person name="Wardroper A."/>
            <person name="Felder M."/>
            <person name="Thangavelu M."/>
            <person name="Johnson D."/>
            <person name="Knights A."/>
            <person name="Loulseged H."/>
            <person name="Mungall K.L."/>
            <person name="Oliver K."/>
            <person name="Price C."/>
            <person name="Quail M.A."/>
            <person name="Urushihara H."/>
            <person name="Hernandez J."/>
            <person name="Rabbinowitsch E."/>
            <person name="Steffen D."/>
            <person name="Sanders M."/>
            <person name="Ma J."/>
            <person name="Kohara Y."/>
            <person name="Sharp S."/>
            <person name="Simmonds M.N."/>
            <person name="Spiegler S."/>
            <person name="Tivey A."/>
            <person name="Sugano S."/>
            <person name="White B."/>
            <person name="Walker D."/>
            <person name="Woodward J.R."/>
            <person name="Winckler T."/>
            <person name="Tanaka Y."/>
            <person name="Shaulsky G."/>
            <person name="Schleicher M."/>
            <person name="Weinstock G.M."/>
            <person name="Rosenthal A."/>
            <person name="Cox E.C."/>
            <person name="Chisholm R.L."/>
            <person name="Gibbs R.A."/>
            <person name="Loomis W.F."/>
            <person name="Platzer M."/>
            <person name="Kay R.R."/>
            <person name="Williams J.G."/>
            <person name="Dear P.H."/>
            <person name="Noegel A.A."/>
            <person name="Barrell B.G."/>
            <person name="Kuspa A."/>
        </authorList>
    </citation>
    <scope>NUCLEOTIDE SEQUENCE [LARGE SCALE GENOMIC DNA]</scope>
    <source>
        <strain>AX4</strain>
    </source>
</reference>
<proteinExistence type="predicted"/>
<keyword id="KW-0479">Metal-binding</keyword>
<keyword id="KW-1185">Reference proteome</keyword>
<keyword id="KW-0862">Zinc</keyword>
<keyword id="KW-0863">Zinc-finger</keyword>
<name>GTAN_DICDI</name>
<gene>
    <name type="primary">gtaN</name>
    <name type="ORF">DDB_G0287057</name>
</gene>
<evidence type="ECO:0000255" key="1">
    <source>
        <dbReference type="PROSITE-ProRule" id="PRU00094"/>
    </source>
</evidence>
<evidence type="ECO:0000256" key="2">
    <source>
        <dbReference type="SAM" id="MobiDB-lite"/>
    </source>
</evidence>
<accession>Q54KX0</accession>
<protein>
    <recommendedName>
        <fullName>GATA zinc finger domain-containing protein 14</fullName>
    </recommendedName>
</protein>
<dbReference type="EMBL" id="AAFI02000096">
    <property type="protein sequence ID" value="EAL63893.1"/>
    <property type="molecule type" value="Genomic_DNA"/>
</dbReference>
<dbReference type="RefSeq" id="XP_637400.1">
    <property type="nucleotide sequence ID" value="XM_632308.1"/>
</dbReference>
<dbReference type="SMR" id="Q54KX0"/>
<dbReference type="FunCoup" id="Q54KX0">
    <property type="interactions" value="877"/>
</dbReference>
<dbReference type="PaxDb" id="44689-DDB0220469"/>
<dbReference type="EnsemblProtists" id="EAL63893">
    <property type="protein sequence ID" value="EAL63893"/>
    <property type="gene ID" value="DDB_G0287057"/>
</dbReference>
<dbReference type="GeneID" id="8625931"/>
<dbReference type="KEGG" id="ddi:DDB_G0287057"/>
<dbReference type="dictyBase" id="DDB_G0287057">
    <property type="gene designation" value="gtaN"/>
</dbReference>
<dbReference type="VEuPathDB" id="AmoebaDB:DDB_G0287057"/>
<dbReference type="eggNOG" id="KOG1601">
    <property type="taxonomic scope" value="Eukaryota"/>
</dbReference>
<dbReference type="HOGENOM" id="CLU_309391_0_0_1"/>
<dbReference type="InParanoid" id="Q54KX0"/>
<dbReference type="OMA" id="TYGQHGS"/>
<dbReference type="PRO" id="PR:Q54KX0"/>
<dbReference type="Proteomes" id="UP000002195">
    <property type="component" value="Chromosome 4"/>
</dbReference>
<dbReference type="GO" id="GO:0043565">
    <property type="term" value="F:sequence-specific DNA binding"/>
    <property type="evidence" value="ECO:0007669"/>
    <property type="project" value="InterPro"/>
</dbReference>
<dbReference type="GO" id="GO:0008270">
    <property type="term" value="F:zinc ion binding"/>
    <property type="evidence" value="ECO:0007669"/>
    <property type="project" value="UniProtKB-KW"/>
</dbReference>
<dbReference type="GO" id="GO:0006355">
    <property type="term" value="P:regulation of DNA-templated transcription"/>
    <property type="evidence" value="ECO:0007669"/>
    <property type="project" value="InterPro"/>
</dbReference>
<dbReference type="CDD" id="cd00202">
    <property type="entry name" value="ZnF_GATA"/>
    <property type="match status" value="1"/>
</dbReference>
<dbReference type="InterPro" id="IPR052138">
    <property type="entry name" value="GATA_ZnFinger_Domain"/>
</dbReference>
<dbReference type="InterPro" id="IPR000679">
    <property type="entry name" value="Znf_GATA"/>
</dbReference>
<dbReference type="PANTHER" id="PTHR47255">
    <property type="entry name" value="GATA TRANSCRIPTION FACTOR 22-RELATED"/>
    <property type="match status" value="1"/>
</dbReference>
<dbReference type="PANTHER" id="PTHR47255:SF4">
    <property type="entry name" value="GATA ZINC FINGER DOMAIN-CONTAINING PROTEIN 12"/>
    <property type="match status" value="1"/>
</dbReference>
<dbReference type="Pfam" id="PF00320">
    <property type="entry name" value="GATA"/>
    <property type="match status" value="1"/>
</dbReference>
<dbReference type="SMART" id="SM00401">
    <property type="entry name" value="ZnF_GATA"/>
    <property type="match status" value="1"/>
</dbReference>
<dbReference type="SUPFAM" id="SSF57716">
    <property type="entry name" value="Glucocorticoid receptor-like (DNA-binding domain)"/>
    <property type="match status" value="1"/>
</dbReference>
<dbReference type="PROSITE" id="PS00344">
    <property type="entry name" value="GATA_ZN_FINGER_1"/>
    <property type="match status" value="1"/>
</dbReference>
<dbReference type="PROSITE" id="PS50114">
    <property type="entry name" value="GATA_ZN_FINGER_2"/>
    <property type="match status" value="1"/>
</dbReference>
<feature type="chain" id="PRO_0000330447" description="GATA zinc finger domain-containing protein 14">
    <location>
        <begin position="1"/>
        <end position="953"/>
    </location>
</feature>
<feature type="zinc finger region" description="GATA-type" evidence="1">
    <location>
        <begin position="893"/>
        <end position="918"/>
    </location>
</feature>
<feature type="region of interest" description="Disordered" evidence="2">
    <location>
        <begin position="1"/>
        <end position="109"/>
    </location>
</feature>
<feature type="region of interest" description="Disordered" evidence="2">
    <location>
        <begin position="216"/>
        <end position="756"/>
    </location>
</feature>
<feature type="region of interest" description="Disordered" evidence="2">
    <location>
        <begin position="934"/>
        <end position="953"/>
    </location>
</feature>
<feature type="compositionally biased region" description="Polar residues" evidence="2">
    <location>
        <begin position="1"/>
        <end position="21"/>
    </location>
</feature>
<feature type="compositionally biased region" description="Low complexity" evidence="2">
    <location>
        <begin position="22"/>
        <end position="89"/>
    </location>
</feature>
<feature type="compositionally biased region" description="Polar residues" evidence="2">
    <location>
        <begin position="90"/>
        <end position="109"/>
    </location>
</feature>
<feature type="compositionally biased region" description="Low complexity" evidence="2">
    <location>
        <begin position="219"/>
        <end position="330"/>
    </location>
</feature>
<feature type="compositionally biased region" description="Low complexity" evidence="2">
    <location>
        <begin position="342"/>
        <end position="683"/>
    </location>
</feature>
<feature type="compositionally biased region" description="Low complexity" evidence="2">
    <location>
        <begin position="690"/>
        <end position="756"/>
    </location>
</feature>